<keyword id="KW-0108">Calcium channel impairing toxin</keyword>
<keyword id="KW-0165">Cleavage on pair of basic residues</keyword>
<keyword id="KW-1015">Disulfide bond</keyword>
<keyword id="KW-0872">Ion channel impairing toxin</keyword>
<keyword id="KW-0960">Knottin</keyword>
<keyword id="KW-0528">Neurotoxin</keyword>
<keyword id="KW-0638">Presynaptic neurotoxin</keyword>
<keyword id="KW-0964">Secreted</keyword>
<keyword id="KW-0732">Signal</keyword>
<keyword id="KW-0800">Toxin</keyword>
<keyword id="KW-1218">Voltage-gated calcium channel impairing toxin</keyword>
<name>O163_CONIM</name>
<reference key="1">
    <citation type="journal article" date="2005" name="Peptides">
        <title>Direct cDNA cloning of novel conopeptide precursors of the O-superfamily.</title>
        <authorList>
            <person name="Kauferstein S."/>
            <person name="Melaun C."/>
            <person name="Mebs D."/>
        </authorList>
    </citation>
    <scope>NUCLEOTIDE SEQUENCE [MRNA]</scope>
    <source>
        <tissue>Venom duct</tissue>
    </source>
</reference>
<sequence>MKLTCMMIVAVLFLTASIFITADNSRNGIENLPRMRRHEMKKPKASKLNKRGCLPDEYFCGFSMIGALLCCSGWCLGICMT</sequence>
<protein>
    <recommendedName>
        <fullName>Omega-conotoxin-like 3</fullName>
    </recommendedName>
</protein>
<comment type="function">
    <text evidence="1">Omega-conotoxins act at presynaptic membranes, they bind and block voltage-gated calcium channels (Cav).</text>
</comment>
<comment type="subcellular location">
    <subcellularLocation>
        <location evidence="1">Secreted</location>
    </subcellularLocation>
</comment>
<comment type="tissue specificity">
    <text>Expressed by the venom duct.</text>
</comment>
<comment type="domain">
    <text evidence="1">The presence of a 'disulfide through disulfide knot' structurally defines this protein as a knottin.</text>
</comment>
<comment type="domain">
    <text>The cysteine framework is VI/VII (C-C-CC-C-C).</text>
</comment>
<comment type="similarity">
    <text evidence="3">Belongs to the conotoxin O1 superfamily.</text>
</comment>
<dbReference type="EMBL" id="AJ851188">
    <property type="protein sequence ID" value="CAH64861.1"/>
    <property type="molecule type" value="mRNA"/>
</dbReference>
<dbReference type="ConoServer" id="1077">
    <property type="toxin name" value="Im6.8 precursor"/>
</dbReference>
<dbReference type="GO" id="GO:0005576">
    <property type="term" value="C:extracellular region"/>
    <property type="evidence" value="ECO:0007669"/>
    <property type="project" value="UniProtKB-SubCell"/>
</dbReference>
<dbReference type="GO" id="GO:0044231">
    <property type="term" value="C:host cell presynaptic membrane"/>
    <property type="evidence" value="ECO:0007669"/>
    <property type="project" value="UniProtKB-KW"/>
</dbReference>
<dbReference type="GO" id="GO:0005246">
    <property type="term" value="F:calcium channel regulator activity"/>
    <property type="evidence" value="ECO:0007669"/>
    <property type="project" value="UniProtKB-KW"/>
</dbReference>
<dbReference type="GO" id="GO:0008200">
    <property type="term" value="F:ion channel inhibitor activity"/>
    <property type="evidence" value="ECO:0007669"/>
    <property type="project" value="InterPro"/>
</dbReference>
<dbReference type="GO" id="GO:0090729">
    <property type="term" value="F:toxin activity"/>
    <property type="evidence" value="ECO:0007669"/>
    <property type="project" value="UniProtKB-KW"/>
</dbReference>
<dbReference type="InterPro" id="IPR004214">
    <property type="entry name" value="Conotoxin"/>
</dbReference>
<dbReference type="InterPro" id="IPR012321">
    <property type="entry name" value="Conotoxin_omega-typ_CS"/>
</dbReference>
<dbReference type="Pfam" id="PF02950">
    <property type="entry name" value="Conotoxin"/>
    <property type="match status" value="1"/>
</dbReference>
<dbReference type="SUPFAM" id="SSF57059">
    <property type="entry name" value="omega toxin-like"/>
    <property type="match status" value="1"/>
</dbReference>
<dbReference type="PROSITE" id="PS60004">
    <property type="entry name" value="OMEGA_CONOTOXIN"/>
    <property type="match status" value="1"/>
</dbReference>
<evidence type="ECO:0000250" key="1"/>
<evidence type="ECO:0000255" key="2"/>
<evidence type="ECO:0000305" key="3"/>
<proteinExistence type="evidence at transcript level"/>
<organism>
    <name type="scientific">Conus imperialis</name>
    <name type="common">Imperial cone</name>
    <dbReference type="NCBI Taxonomy" id="35631"/>
    <lineage>
        <taxon>Eukaryota</taxon>
        <taxon>Metazoa</taxon>
        <taxon>Spiralia</taxon>
        <taxon>Lophotrochozoa</taxon>
        <taxon>Mollusca</taxon>
        <taxon>Gastropoda</taxon>
        <taxon>Caenogastropoda</taxon>
        <taxon>Neogastropoda</taxon>
        <taxon>Conoidea</taxon>
        <taxon>Conidae</taxon>
        <taxon>Conus</taxon>
        <taxon>Stephanoconus</taxon>
    </lineage>
</organism>
<feature type="signal peptide" evidence="2">
    <location>
        <begin position="1"/>
        <end position="22"/>
    </location>
</feature>
<feature type="propeptide" id="PRO_0000034912" evidence="1">
    <location>
        <begin position="23"/>
        <end position="51"/>
    </location>
</feature>
<feature type="peptide" id="PRO_0000034913" description="Omega-conotoxin-like 3">
    <location>
        <begin position="52"/>
        <end position="81"/>
    </location>
</feature>
<feature type="disulfide bond" evidence="1">
    <location>
        <begin position="53"/>
        <end position="71"/>
    </location>
</feature>
<feature type="disulfide bond" evidence="1">
    <location>
        <begin position="60"/>
        <end position="75"/>
    </location>
</feature>
<feature type="disulfide bond" evidence="1">
    <location>
        <begin position="70"/>
        <end position="79"/>
    </location>
</feature>
<accession>Q5K0C0</accession>